<proteinExistence type="inferred from homology"/>
<comment type="function">
    <text evidence="1">ATP-dependent specificity component of the Clp protease. It directs the protease to specific substrates. Can perform chaperone functions in the absence of ClpP.</text>
</comment>
<comment type="subunit">
    <text evidence="1">Component of the ClpX-ClpP complex. Forms a hexameric ring that, in the presence of ATP, binds to fourteen ClpP subunits assembled into a disk-like structure with a central cavity, resembling the structure of eukaryotic proteasomes.</text>
</comment>
<comment type="similarity">
    <text evidence="1">Belongs to the ClpX chaperone family.</text>
</comment>
<feature type="chain" id="PRO_1000024685" description="ATP-dependent Clp protease ATP-binding subunit ClpX">
    <location>
        <begin position="1"/>
        <end position="408"/>
    </location>
</feature>
<feature type="domain" description="ClpX-type ZB" evidence="2">
    <location>
        <begin position="1"/>
        <end position="53"/>
    </location>
</feature>
<feature type="binding site" evidence="2">
    <location>
        <position position="12"/>
    </location>
    <ligand>
        <name>Zn(2+)</name>
        <dbReference type="ChEBI" id="CHEBI:29105"/>
    </ligand>
</feature>
<feature type="binding site" evidence="2">
    <location>
        <position position="15"/>
    </location>
    <ligand>
        <name>Zn(2+)</name>
        <dbReference type="ChEBI" id="CHEBI:29105"/>
    </ligand>
</feature>
<feature type="binding site" evidence="2">
    <location>
        <position position="34"/>
    </location>
    <ligand>
        <name>Zn(2+)</name>
        <dbReference type="ChEBI" id="CHEBI:29105"/>
    </ligand>
</feature>
<feature type="binding site" evidence="2">
    <location>
        <position position="37"/>
    </location>
    <ligand>
        <name>Zn(2+)</name>
        <dbReference type="ChEBI" id="CHEBI:29105"/>
    </ligand>
</feature>
<feature type="binding site" evidence="1">
    <location>
        <begin position="118"/>
        <end position="125"/>
    </location>
    <ligand>
        <name>ATP</name>
        <dbReference type="ChEBI" id="CHEBI:30616"/>
    </ligand>
</feature>
<name>CLPX_STRT1</name>
<organism>
    <name type="scientific">Streptococcus thermophilus (strain CNRZ 1066)</name>
    <dbReference type="NCBI Taxonomy" id="299768"/>
    <lineage>
        <taxon>Bacteria</taxon>
        <taxon>Bacillati</taxon>
        <taxon>Bacillota</taxon>
        <taxon>Bacilli</taxon>
        <taxon>Lactobacillales</taxon>
        <taxon>Streptococcaceae</taxon>
        <taxon>Streptococcus</taxon>
    </lineage>
</organism>
<dbReference type="EMBL" id="CP000024">
    <property type="protein sequence ID" value="AAV62177.1"/>
    <property type="molecule type" value="Genomic_DNA"/>
</dbReference>
<dbReference type="RefSeq" id="WP_002950151.1">
    <property type="nucleotide sequence ID" value="NC_006449.1"/>
</dbReference>
<dbReference type="SMR" id="Q5M0S4"/>
<dbReference type="GeneID" id="66898485"/>
<dbReference type="KEGG" id="stc:str0581"/>
<dbReference type="HOGENOM" id="CLU_014218_8_2_9"/>
<dbReference type="GO" id="GO:0009376">
    <property type="term" value="C:HslUV protease complex"/>
    <property type="evidence" value="ECO:0007669"/>
    <property type="project" value="TreeGrafter"/>
</dbReference>
<dbReference type="GO" id="GO:0005524">
    <property type="term" value="F:ATP binding"/>
    <property type="evidence" value="ECO:0007669"/>
    <property type="project" value="UniProtKB-UniRule"/>
</dbReference>
<dbReference type="GO" id="GO:0016887">
    <property type="term" value="F:ATP hydrolysis activity"/>
    <property type="evidence" value="ECO:0007669"/>
    <property type="project" value="InterPro"/>
</dbReference>
<dbReference type="GO" id="GO:0140662">
    <property type="term" value="F:ATP-dependent protein folding chaperone"/>
    <property type="evidence" value="ECO:0007669"/>
    <property type="project" value="InterPro"/>
</dbReference>
<dbReference type="GO" id="GO:0046983">
    <property type="term" value="F:protein dimerization activity"/>
    <property type="evidence" value="ECO:0007669"/>
    <property type="project" value="InterPro"/>
</dbReference>
<dbReference type="GO" id="GO:0051082">
    <property type="term" value="F:unfolded protein binding"/>
    <property type="evidence" value="ECO:0007669"/>
    <property type="project" value="UniProtKB-UniRule"/>
</dbReference>
<dbReference type="GO" id="GO:0008270">
    <property type="term" value="F:zinc ion binding"/>
    <property type="evidence" value="ECO:0007669"/>
    <property type="project" value="InterPro"/>
</dbReference>
<dbReference type="GO" id="GO:0051301">
    <property type="term" value="P:cell division"/>
    <property type="evidence" value="ECO:0007669"/>
    <property type="project" value="TreeGrafter"/>
</dbReference>
<dbReference type="GO" id="GO:0051603">
    <property type="term" value="P:proteolysis involved in protein catabolic process"/>
    <property type="evidence" value="ECO:0007669"/>
    <property type="project" value="TreeGrafter"/>
</dbReference>
<dbReference type="CDD" id="cd19497">
    <property type="entry name" value="RecA-like_ClpX"/>
    <property type="match status" value="1"/>
</dbReference>
<dbReference type="FunFam" id="1.10.8.60:FF:000002">
    <property type="entry name" value="ATP-dependent Clp protease ATP-binding subunit ClpX"/>
    <property type="match status" value="1"/>
</dbReference>
<dbReference type="FunFam" id="3.40.50.300:FF:000005">
    <property type="entry name" value="ATP-dependent Clp protease ATP-binding subunit ClpX"/>
    <property type="match status" value="1"/>
</dbReference>
<dbReference type="Gene3D" id="1.10.8.60">
    <property type="match status" value="1"/>
</dbReference>
<dbReference type="Gene3D" id="6.20.220.10">
    <property type="entry name" value="ClpX chaperone, C4-type zinc finger domain"/>
    <property type="match status" value="1"/>
</dbReference>
<dbReference type="Gene3D" id="3.40.50.300">
    <property type="entry name" value="P-loop containing nucleotide triphosphate hydrolases"/>
    <property type="match status" value="1"/>
</dbReference>
<dbReference type="HAMAP" id="MF_00175">
    <property type="entry name" value="ClpX"/>
    <property type="match status" value="1"/>
</dbReference>
<dbReference type="InterPro" id="IPR003593">
    <property type="entry name" value="AAA+_ATPase"/>
</dbReference>
<dbReference type="InterPro" id="IPR050052">
    <property type="entry name" value="ATP-dep_Clp_protease_ClpX"/>
</dbReference>
<dbReference type="InterPro" id="IPR003959">
    <property type="entry name" value="ATPase_AAA_core"/>
</dbReference>
<dbReference type="InterPro" id="IPR019489">
    <property type="entry name" value="Clp_ATPase_C"/>
</dbReference>
<dbReference type="InterPro" id="IPR004487">
    <property type="entry name" value="Clp_protease_ATP-bd_su_ClpX"/>
</dbReference>
<dbReference type="InterPro" id="IPR046425">
    <property type="entry name" value="ClpX_bact"/>
</dbReference>
<dbReference type="InterPro" id="IPR027417">
    <property type="entry name" value="P-loop_NTPase"/>
</dbReference>
<dbReference type="InterPro" id="IPR010603">
    <property type="entry name" value="Znf_CppX_C4"/>
</dbReference>
<dbReference type="InterPro" id="IPR038366">
    <property type="entry name" value="Znf_CppX_C4_sf"/>
</dbReference>
<dbReference type="NCBIfam" id="TIGR00382">
    <property type="entry name" value="clpX"/>
    <property type="match status" value="1"/>
</dbReference>
<dbReference type="NCBIfam" id="NF003745">
    <property type="entry name" value="PRK05342.1"/>
    <property type="match status" value="1"/>
</dbReference>
<dbReference type="PANTHER" id="PTHR48102:SF7">
    <property type="entry name" value="ATP-DEPENDENT CLP PROTEASE ATP-BINDING SUBUNIT CLPX-LIKE, MITOCHONDRIAL"/>
    <property type="match status" value="1"/>
</dbReference>
<dbReference type="PANTHER" id="PTHR48102">
    <property type="entry name" value="ATP-DEPENDENT CLP PROTEASE ATP-BINDING SUBUNIT CLPX-LIKE, MITOCHONDRIAL-RELATED"/>
    <property type="match status" value="1"/>
</dbReference>
<dbReference type="Pfam" id="PF07724">
    <property type="entry name" value="AAA_2"/>
    <property type="match status" value="1"/>
</dbReference>
<dbReference type="Pfam" id="PF10431">
    <property type="entry name" value="ClpB_D2-small"/>
    <property type="match status" value="1"/>
</dbReference>
<dbReference type="Pfam" id="PF06689">
    <property type="entry name" value="zf-C4_ClpX"/>
    <property type="match status" value="1"/>
</dbReference>
<dbReference type="SMART" id="SM00382">
    <property type="entry name" value="AAA"/>
    <property type="match status" value="1"/>
</dbReference>
<dbReference type="SMART" id="SM01086">
    <property type="entry name" value="ClpB_D2-small"/>
    <property type="match status" value="1"/>
</dbReference>
<dbReference type="SMART" id="SM00994">
    <property type="entry name" value="zf-C4_ClpX"/>
    <property type="match status" value="1"/>
</dbReference>
<dbReference type="SUPFAM" id="SSF57716">
    <property type="entry name" value="Glucocorticoid receptor-like (DNA-binding domain)"/>
    <property type="match status" value="1"/>
</dbReference>
<dbReference type="SUPFAM" id="SSF52540">
    <property type="entry name" value="P-loop containing nucleoside triphosphate hydrolases"/>
    <property type="match status" value="1"/>
</dbReference>
<dbReference type="PROSITE" id="PS51902">
    <property type="entry name" value="CLPX_ZB"/>
    <property type="match status" value="1"/>
</dbReference>
<evidence type="ECO:0000255" key="1">
    <source>
        <dbReference type="HAMAP-Rule" id="MF_00175"/>
    </source>
</evidence>
<evidence type="ECO:0000255" key="2">
    <source>
        <dbReference type="PROSITE-ProRule" id="PRU01250"/>
    </source>
</evidence>
<sequence length="408" mass="45063">MAGNRNEEMVYCSFCGKNQEEVKKIIAGNGVFICNECVALSQEIIREETAEEVLADLAETPKPKELLDILNNYVVGQDRVKRALAVAVYNHYKRINFTESREDNDVDLQKSNILMIGPTGSGKTYLAQTLARSLNVPFAIADATSLTEAGYVGEDVENILLKLIQAADFNIERAERGIIYVDEIDKIAKKGENVSITRDVSGEGVQQALLKIIEGTVASVPPQGGRKHPNQEMIQIDTKNILFIVGGAFDGIEDIVKQRLGEKIIGFGQNNKAIDDESSYMKEIVAEDIQKFGLIPEFIGRLPVLATLEQLTVDDLVRILTEPRNALVKQYQTLLSYDGVELEFDQDALEAIASKAIERKTGARGLRSIIEEVMMDVMFEIPSLEDVTKVRITKEAVDGKAAPVLETA</sequence>
<keyword id="KW-0067">ATP-binding</keyword>
<keyword id="KW-0143">Chaperone</keyword>
<keyword id="KW-0479">Metal-binding</keyword>
<keyword id="KW-0547">Nucleotide-binding</keyword>
<keyword id="KW-0862">Zinc</keyword>
<protein>
    <recommendedName>
        <fullName evidence="1">ATP-dependent Clp protease ATP-binding subunit ClpX</fullName>
    </recommendedName>
</protein>
<gene>
    <name evidence="1" type="primary">clpX</name>
    <name type="ordered locus">str0581</name>
</gene>
<reference key="1">
    <citation type="journal article" date="2004" name="Nat. Biotechnol.">
        <title>Complete sequence and comparative genome analysis of the dairy bacterium Streptococcus thermophilus.</title>
        <authorList>
            <person name="Bolotin A."/>
            <person name="Quinquis B."/>
            <person name="Renault P."/>
            <person name="Sorokin A."/>
            <person name="Ehrlich S.D."/>
            <person name="Kulakauskas S."/>
            <person name="Lapidus A."/>
            <person name="Goltsman E."/>
            <person name="Mazur M."/>
            <person name="Pusch G.D."/>
            <person name="Fonstein M."/>
            <person name="Overbeek R."/>
            <person name="Kyprides N."/>
            <person name="Purnelle B."/>
            <person name="Prozzi D."/>
            <person name="Ngui K."/>
            <person name="Masuy D."/>
            <person name="Hancy F."/>
            <person name="Burteau S."/>
            <person name="Boutry M."/>
            <person name="Delcour J."/>
            <person name="Goffeau A."/>
            <person name="Hols P."/>
        </authorList>
    </citation>
    <scope>NUCLEOTIDE SEQUENCE [LARGE SCALE GENOMIC DNA]</scope>
    <source>
        <strain>CNRZ 1066</strain>
    </source>
</reference>
<accession>Q5M0S4</accession>